<evidence type="ECO:0000250" key="1">
    <source>
        <dbReference type="UniProtKB" id="Q65147"/>
    </source>
</evidence>
<evidence type="ECO:0000255" key="2"/>
<evidence type="ECO:0000256" key="3">
    <source>
        <dbReference type="SAM" id="MobiDB-lite"/>
    </source>
</evidence>
<evidence type="ECO:0000305" key="4"/>
<organismHost>
    <name type="scientific">Ornithodoros</name>
    <name type="common">relapsing fever ticks</name>
    <dbReference type="NCBI Taxonomy" id="6937"/>
</organismHost>
<organismHost>
    <name type="scientific">Phacochoerus aethiopicus</name>
    <name type="common">Warthog</name>
    <dbReference type="NCBI Taxonomy" id="85517"/>
</organismHost>
<organismHost>
    <name type="scientific">Phacochoerus africanus</name>
    <name type="common">Warthog</name>
    <dbReference type="NCBI Taxonomy" id="41426"/>
</organismHost>
<organismHost>
    <name type="scientific">Potamochoerus larvatus</name>
    <name type="common">Bushpig</name>
    <dbReference type="NCBI Taxonomy" id="273792"/>
</organismHost>
<organismHost>
    <name type="scientific">Sus scrofa</name>
    <name type="common">Pig</name>
    <dbReference type="NCBI Taxonomy" id="9823"/>
</organismHost>
<gene>
    <name type="ordered locus">Pret-060</name>
</gene>
<sequence>MVEPREQFFQDLLSAVDQQMDTVKNDIKDIMKEKTSFMVSFENFIERYDTMEKNIQDLQNKYEEMAANLMTVMTDTKIQLGAIIAQLEILMINGTPLPAKKTTIKEAMPLPLSNTNNEQTSPPASGKTSETPKKNPTNAMFFTRSEWASSNTFREKFLTPEIQAILDEQFANKTGIERLHAEGLYMWRTQFSDEQKKMVKEMMKK</sequence>
<proteinExistence type="inferred from homology"/>
<keyword id="KW-1072">Activation of host autophagy by virus</keyword>
<keyword id="KW-0175">Coiled coil</keyword>
<keyword id="KW-1035">Host cytoplasm</keyword>
<keyword id="KW-0945">Host-virus interaction</keyword>
<organism>
    <name type="scientific">African swine fever virus (isolate Tick/South Africa/Pretoriuskop Pr4/1996)</name>
    <name type="common">ASFV</name>
    <dbReference type="NCBI Taxonomy" id="561443"/>
    <lineage>
        <taxon>Viruses</taxon>
        <taxon>Varidnaviria</taxon>
        <taxon>Bamfordvirae</taxon>
        <taxon>Nucleocytoviricota</taxon>
        <taxon>Pokkesviricetes</taxon>
        <taxon>Asfuvirales</taxon>
        <taxon>Asfarviridae</taxon>
        <taxon>Asfivirus</taxon>
        <taxon>African swine fever virus</taxon>
    </lineage>
</organism>
<comment type="function">
    <text evidence="1">Induces host endoplasmic reticulum stress and consequently activates autophagy and NF-kappa-B signaling pathway. In turn, may induce autophagy-mediated STING1 degradation and innate immune evasion.</text>
</comment>
<comment type="subcellular location">
    <subcellularLocation>
        <location evidence="1">Host cytoplasm</location>
    </subcellularLocation>
</comment>
<comment type="induction">
    <text evidence="4">Expressed in the early phase of the viral replicative cycle.</text>
</comment>
<comment type="similarity">
    <text evidence="4">Belongs to the asfivirus K205R family.</text>
</comment>
<accession>P0CA99</accession>
<feature type="chain" id="PRO_0000373589" description="Uncharacterized protein K205R">
    <location>
        <begin position="1"/>
        <end position="205"/>
    </location>
</feature>
<feature type="region of interest" description="Disordered" evidence="3">
    <location>
        <begin position="111"/>
        <end position="138"/>
    </location>
</feature>
<feature type="coiled-coil region" evidence="2">
    <location>
        <begin position="10"/>
        <end position="75"/>
    </location>
</feature>
<feature type="compositionally biased region" description="Polar residues" evidence="3">
    <location>
        <begin position="112"/>
        <end position="138"/>
    </location>
</feature>
<dbReference type="EMBL" id="AY261363">
    <property type="status" value="NOT_ANNOTATED_CDS"/>
    <property type="molecule type" value="Genomic_DNA"/>
</dbReference>
<dbReference type="SMR" id="P0CA99"/>
<dbReference type="Proteomes" id="UP000000859">
    <property type="component" value="Segment"/>
</dbReference>
<dbReference type="GO" id="GO:0030430">
    <property type="term" value="C:host cell cytoplasm"/>
    <property type="evidence" value="ECO:0007669"/>
    <property type="project" value="UniProtKB-SubCell"/>
</dbReference>
<dbReference type="GO" id="GO:0039520">
    <property type="term" value="P:symbiont-mediated activation of host autophagy"/>
    <property type="evidence" value="ECO:0007669"/>
    <property type="project" value="UniProtKB-KW"/>
</dbReference>
<reference key="1">
    <citation type="submission" date="2003-03" db="EMBL/GenBank/DDBJ databases">
        <title>African swine fever virus genomes.</title>
        <authorList>
            <person name="Kutish G.F."/>
            <person name="Rock D.L."/>
        </authorList>
    </citation>
    <scope>NUCLEOTIDE SEQUENCE [LARGE SCALE GENOMIC DNA]</scope>
</reference>
<protein>
    <recommendedName>
        <fullName>Uncharacterized protein K205R</fullName>
        <shortName>pK205R</shortName>
    </recommendedName>
</protein>
<name>VF205_ASFP4</name>